<feature type="chain" id="PRO_1000017997" description="Arginine--tRNA ligase">
    <location>
        <begin position="1"/>
        <end position="593"/>
    </location>
</feature>
<feature type="short sequence motif" description="'HIGH' region">
    <location>
        <begin position="138"/>
        <end position="148"/>
    </location>
</feature>
<comment type="catalytic activity">
    <reaction evidence="1">
        <text>tRNA(Arg) + L-arginine + ATP = L-arginyl-tRNA(Arg) + AMP + diphosphate</text>
        <dbReference type="Rhea" id="RHEA:20301"/>
        <dbReference type="Rhea" id="RHEA-COMP:9658"/>
        <dbReference type="Rhea" id="RHEA-COMP:9673"/>
        <dbReference type="ChEBI" id="CHEBI:30616"/>
        <dbReference type="ChEBI" id="CHEBI:32682"/>
        <dbReference type="ChEBI" id="CHEBI:33019"/>
        <dbReference type="ChEBI" id="CHEBI:78442"/>
        <dbReference type="ChEBI" id="CHEBI:78513"/>
        <dbReference type="ChEBI" id="CHEBI:456215"/>
        <dbReference type="EC" id="6.1.1.19"/>
    </reaction>
</comment>
<comment type="subunit">
    <text evidence="1">Monomer.</text>
</comment>
<comment type="subcellular location">
    <subcellularLocation>
        <location evidence="1">Cytoplasm</location>
    </subcellularLocation>
</comment>
<comment type="similarity">
    <text evidence="1">Belongs to the class-I aminoacyl-tRNA synthetase family.</text>
</comment>
<gene>
    <name evidence="1" type="primary">argS</name>
    <name type="ordered locus">Bcen_2305</name>
</gene>
<protein>
    <recommendedName>
        <fullName evidence="1">Arginine--tRNA ligase</fullName>
        <ecNumber evidence="1">6.1.1.19</ecNumber>
    </recommendedName>
    <alternativeName>
        <fullName evidence="1">Arginyl-tRNA synthetase</fullName>
        <shortName evidence="1">ArgRS</shortName>
    </alternativeName>
</protein>
<evidence type="ECO:0000255" key="1">
    <source>
        <dbReference type="HAMAP-Rule" id="MF_00123"/>
    </source>
</evidence>
<proteinExistence type="inferred from homology"/>
<organism>
    <name type="scientific">Burkholderia orbicola (strain AU 1054)</name>
    <dbReference type="NCBI Taxonomy" id="331271"/>
    <lineage>
        <taxon>Bacteria</taxon>
        <taxon>Pseudomonadati</taxon>
        <taxon>Pseudomonadota</taxon>
        <taxon>Betaproteobacteria</taxon>
        <taxon>Burkholderiales</taxon>
        <taxon>Burkholderiaceae</taxon>
        <taxon>Burkholderia</taxon>
        <taxon>Burkholderia cepacia complex</taxon>
        <taxon>Burkholderia orbicola</taxon>
    </lineage>
</organism>
<reference key="1">
    <citation type="submission" date="2006-05" db="EMBL/GenBank/DDBJ databases">
        <title>Complete sequence of chromosome 1 of Burkholderia cenocepacia AU 1054.</title>
        <authorList>
            <consortium name="US DOE Joint Genome Institute"/>
            <person name="Copeland A."/>
            <person name="Lucas S."/>
            <person name="Lapidus A."/>
            <person name="Barry K."/>
            <person name="Detter J.C."/>
            <person name="Glavina del Rio T."/>
            <person name="Hammon N."/>
            <person name="Israni S."/>
            <person name="Dalin E."/>
            <person name="Tice H."/>
            <person name="Pitluck S."/>
            <person name="Chain P."/>
            <person name="Malfatti S."/>
            <person name="Shin M."/>
            <person name="Vergez L."/>
            <person name="Schmutz J."/>
            <person name="Larimer F."/>
            <person name="Land M."/>
            <person name="Hauser L."/>
            <person name="Kyrpides N."/>
            <person name="Lykidis A."/>
            <person name="LiPuma J.J."/>
            <person name="Konstantinidis K."/>
            <person name="Tiedje J.M."/>
            <person name="Richardson P."/>
        </authorList>
    </citation>
    <scope>NUCLEOTIDE SEQUENCE [LARGE SCALE GENOMIC DNA]</scope>
    <source>
        <strain>AU 1054</strain>
    </source>
</reference>
<accession>Q1BT49</accession>
<name>SYR_BURO1</name>
<dbReference type="EC" id="6.1.1.19" evidence="1"/>
<dbReference type="EMBL" id="CP000378">
    <property type="protein sequence ID" value="ABF77206.1"/>
    <property type="molecule type" value="Genomic_DNA"/>
</dbReference>
<dbReference type="SMR" id="Q1BT49"/>
<dbReference type="HOGENOM" id="CLU_006406_0_1_4"/>
<dbReference type="GO" id="GO:0005737">
    <property type="term" value="C:cytoplasm"/>
    <property type="evidence" value="ECO:0007669"/>
    <property type="project" value="UniProtKB-SubCell"/>
</dbReference>
<dbReference type="GO" id="GO:0004814">
    <property type="term" value="F:arginine-tRNA ligase activity"/>
    <property type="evidence" value="ECO:0007669"/>
    <property type="project" value="UniProtKB-UniRule"/>
</dbReference>
<dbReference type="GO" id="GO:0005524">
    <property type="term" value="F:ATP binding"/>
    <property type="evidence" value="ECO:0007669"/>
    <property type="project" value="UniProtKB-UniRule"/>
</dbReference>
<dbReference type="GO" id="GO:0006420">
    <property type="term" value="P:arginyl-tRNA aminoacylation"/>
    <property type="evidence" value="ECO:0007669"/>
    <property type="project" value="UniProtKB-UniRule"/>
</dbReference>
<dbReference type="CDD" id="cd00671">
    <property type="entry name" value="ArgRS_core"/>
    <property type="match status" value="1"/>
</dbReference>
<dbReference type="FunFam" id="1.10.730.10:FF:000008">
    <property type="entry name" value="Arginine--tRNA ligase"/>
    <property type="match status" value="1"/>
</dbReference>
<dbReference type="FunFam" id="3.40.50.620:FF:000062">
    <property type="entry name" value="Arginine--tRNA ligase"/>
    <property type="match status" value="1"/>
</dbReference>
<dbReference type="Gene3D" id="3.30.1360.70">
    <property type="entry name" value="Arginyl tRNA synthetase N-terminal domain"/>
    <property type="match status" value="1"/>
</dbReference>
<dbReference type="Gene3D" id="3.40.50.620">
    <property type="entry name" value="HUPs"/>
    <property type="match status" value="1"/>
</dbReference>
<dbReference type="Gene3D" id="1.10.730.10">
    <property type="entry name" value="Isoleucyl-tRNA Synthetase, Domain 1"/>
    <property type="match status" value="1"/>
</dbReference>
<dbReference type="HAMAP" id="MF_00123">
    <property type="entry name" value="Arg_tRNA_synth"/>
    <property type="match status" value="1"/>
</dbReference>
<dbReference type="InterPro" id="IPR001412">
    <property type="entry name" value="aa-tRNA-synth_I_CS"/>
</dbReference>
<dbReference type="InterPro" id="IPR001278">
    <property type="entry name" value="Arg-tRNA-ligase"/>
</dbReference>
<dbReference type="InterPro" id="IPR005148">
    <property type="entry name" value="Arg-tRNA-synth_N"/>
</dbReference>
<dbReference type="InterPro" id="IPR036695">
    <property type="entry name" value="Arg-tRNA-synth_N_sf"/>
</dbReference>
<dbReference type="InterPro" id="IPR035684">
    <property type="entry name" value="ArgRS_core"/>
</dbReference>
<dbReference type="InterPro" id="IPR008909">
    <property type="entry name" value="DALR_anticod-bd"/>
</dbReference>
<dbReference type="InterPro" id="IPR014729">
    <property type="entry name" value="Rossmann-like_a/b/a_fold"/>
</dbReference>
<dbReference type="InterPro" id="IPR009080">
    <property type="entry name" value="tRNAsynth_Ia_anticodon-bd"/>
</dbReference>
<dbReference type="NCBIfam" id="TIGR00456">
    <property type="entry name" value="argS"/>
    <property type="match status" value="1"/>
</dbReference>
<dbReference type="PANTHER" id="PTHR11956:SF5">
    <property type="entry name" value="ARGININE--TRNA LIGASE, CYTOPLASMIC"/>
    <property type="match status" value="1"/>
</dbReference>
<dbReference type="PANTHER" id="PTHR11956">
    <property type="entry name" value="ARGINYL-TRNA SYNTHETASE"/>
    <property type="match status" value="1"/>
</dbReference>
<dbReference type="Pfam" id="PF03485">
    <property type="entry name" value="Arg_tRNA_synt_N"/>
    <property type="match status" value="1"/>
</dbReference>
<dbReference type="Pfam" id="PF05746">
    <property type="entry name" value="DALR_1"/>
    <property type="match status" value="1"/>
</dbReference>
<dbReference type="Pfam" id="PF00750">
    <property type="entry name" value="tRNA-synt_1d"/>
    <property type="match status" value="1"/>
</dbReference>
<dbReference type="PRINTS" id="PR01038">
    <property type="entry name" value="TRNASYNTHARG"/>
</dbReference>
<dbReference type="SMART" id="SM01016">
    <property type="entry name" value="Arg_tRNA_synt_N"/>
    <property type="match status" value="1"/>
</dbReference>
<dbReference type="SMART" id="SM00836">
    <property type="entry name" value="DALR_1"/>
    <property type="match status" value="1"/>
</dbReference>
<dbReference type="SUPFAM" id="SSF47323">
    <property type="entry name" value="Anticodon-binding domain of a subclass of class I aminoacyl-tRNA synthetases"/>
    <property type="match status" value="1"/>
</dbReference>
<dbReference type="SUPFAM" id="SSF55190">
    <property type="entry name" value="Arginyl-tRNA synthetase (ArgRS), N-terminal 'additional' domain"/>
    <property type="match status" value="1"/>
</dbReference>
<dbReference type="SUPFAM" id="SSF52374">
    <property type="entry name" value="Nucleotidylyl transferase"/>
    <property type="match status" value="1"/>
</dbReference>
<dbReference type="PROSITE" id="PS00178">
    <property type="entry name" value="AA_TRNA_LIGASE_I"/>
    <property type="match status" value="1"/>
</dbReference>
<sequence length="593" mass="64242">MLPAHKQTLEALLADSVKQVAHALKGADAAFVAPAITLERPKVAAHGDVACNVAMQLAKPLGTNPRQLAEQIVAALTAQPAAQGLVEAAEIAGPGFINLRLSAAAKQAVIAAVFEQGRAFGTSDREKGKQVLLEFVSANPTGPLHVGHGRQAALGDVLANVIASQGYAVHREFYYNDAGVQIGNLAISTQARARGLKPGDAGWPEAAYNGEYIADIARDYLNGETVAASDGEPVKGTGDVEDLDAIRKFAVTYLRREQDMDLQAFGVKFDQYYLESSLYSEGRVEKTVDALVKAGMTYEQDGALWLRTTDEGDDKDRVMRKSDGTYTYFVPDVAYHVTKWERGFTKVINIQGSDHHGTIARVRAGLQGLHIGIPKGYPDYVLHKMVTVMRDGQEVKISKRAGSYVTVRDLIEWSGGAAAGQEAAPDLIDEATITRGRDAVRFFLISRKADTEFVFDIDLALKQNDENPVYYVQYAHARICSVLNELKSRYNVDVAQLPGADLSQLTSAQAASLMQKLAEYPDMLTHAANELAPHAVAFYLRDLAGEFHSFYNAERVLVDDEAPRNARAALLAATRQVLENGLAVLGVSAPAKM</sequence>
<keyword id="KW-0030">Aminoacyl-tRNA synthetase</keyword>
<keyword id="KW-0067">ATP-binding</keyword>
<keyword id="KW-0963">Cytoplasm</keyword>
<keyword id="KW-0436">Ligase</keyword>
<keyword id="KW-0547">Nucleotide-binding</keyword>
<keyword id="KW-0648">Protein biosynthesis</keyword>